<keyword id="KW-0378">Hydrolase</keyword>
<keyword id="KW-0546">Nucleotide metabolism</keyword>
<keyword id="KW-0547">Nucleotide-binding</keyword>
<gene>
    <name evidence="1" type="primary">dcd</name>
    <name type="ordered locus">Sbal195_2575</name>
</gene>
<protein>
    <recommendedName>
        <fullName evidence="1">dCTP deaminase</fullName>
        <ecNumber evidence="1">3.5.4.13</ecNumber>
    </recommendedName>
    <alternativeName>
        <fullName evidence="1">Deoxycytidine triphosphate deaminase</fullName>
    </alternativeName>
</protein>
<feature type="chain" id="PRO_1000076631" description="dCTP deaminase">
    <location>
        <begin position="1"/>
        <end position="193"/>
    </location>
</feature>
<feature type="region of interest" description="Disordered" evidence="2">
    <location>
        <begin position="174"/>
        <end position="193"/>
    </location>
</feature>
<feature type="active site" description="Proton donor/acceptor" evidence="1">
    <location>
        <position position="138"/>
    </location>
</feature>
<feature type="binding site" evidence="1">
    <location>
        <begin position="110"/>
        <end position="115"/>
    </location>
    <ligand>
        <name>dCTP</name>
        <dbReference type="ChEBI" id="CHEBI:61481"/>
    </ligand>
</feature>
<feature type="binding site" evidence="1">
    <location>
        <position position="128"/>
    </location>
    <ligand>
        <name>dCTP</name>
        <dbReference type="ChEBI" id="CHEBI:61481"/>
    </ligand>
</feature>
<feature type="binding site" evidence="1">
    <location>
        <begin position="136"/>
        <end position="138"/>
    </location>
    <ligand>
        <name>dCTP</name>
        <dbReference type="ChEBI" id="CHEBI:61481"/>
    </ligand>
</feature>
<feature type="binding site" evidence="1">
    <location>
        <position position="171"/>
    </location>
    <ligand>
        <name>dCTP</name>
        <dbReference type="ChEBI" id="CHEBI:61481"/>
    </ligand>
</feature>
<feature type="binding site" evidence="1">
    <location>
        <position position="178"/>
    </location>
    <ligand>
        <name>dCTP</name>
        <dbReference type="ChEBI" id="CHEBI:61481"/>
    </ligand>
</feature>
<feature type="binding site" evidence="1">
    <location>
        <position position="182"/>
    </location>
    <ligand>
        <name>dCTP</name>
        <dbReference type="ChEBI" id="CHEBI:61481"/>
    </ligand>
</feature>
<organism>
    <name type="scientific">Shewanella baltica (strain OS195)</name>
    <dbReference type="NCBI Taxonomy" id="399599"/>
    <lineage>
        <taxon>Bacteria</taxon>
        <taxon>Pseudomonadati</taxon>
        <taxon>Pseudomonadota</taxon>
        <taxon>Gammaproteobacteria</taxon>
        <taxon>Alteromonadales</taxon>
        <taxon>Shewanellaceae</taxon>
        <taxon>Shewanella</taxon>
    </lineage>
</organism>
<sequence>MRLTDIEIEQALDNGTIVIEPRPGIEAISGVSVDVRLGGQFRVFKDHTAPYIDLSGPSVEMQAALDRVMSEIIEIPDGEAFFLHPGELALAVTYESVTLPADIVGWLDGRSSLARLGLMVHVTAHRIDPGWQGKIVLEFYNSGKLPLALRPRMTIGALNFERLNHAVARPYNTRKSAKYKDQQEAVASRISQD</sequence>
<dbReference type="EC" id="3.5.4.13" evidence="1"/>
<dbReference type="EMBL" id="CP000891">
    <property type="protein sequence ID" value="ABX49743.1"/>
    <property type="molecule type" value="Genomic_DNA"/>
</dbReference>
<dbReference type="RefSeq" id="WP_006081925.1">
    <property type="nucleotide sequence ID" value="NC_009997.1"/>
</dbReference>
<dbReference type="SMR" id="A9L4F3"/>
<dbReference type="GeneID" id="11772674"/>
<dbReference type="KEGG" id="sbn:Sbal195_2575"/>
<dbReference type="HOGENOM" id="CLU_087476_2_0_6"/>
<dbReference type="UniPathway" id="UPA00610">
    <property type="reaction ID" value="UER00665"/>
</dbReference>
<dbReference type="Proteomes" id="UP000000770">
    <property type="component" value="Chromosome"/>
</dbReference>
<dbReference type="GO" id="GO:0008829">
    <property type="term" value="F:dCTP deaminase activity"/>
    <property type="evidence" value="ECO:0007669"/>
    <property type="project" value="UniProtKB-UniRule"/>
</dbReference>
<dbReference type="GO" id="GO:0000166">
    <property type="term" value="F:nucleotide binding"/>
    <property type="evidence" value="ECO:0007669"/>
    <property type="project" value="UniProtKB-KW"/>
</dbReference>
<dbReference type="GO" id="GO:0006226">
    <property type="term" value="P:dUMP biosynthetic process"/>
    <property type="evidence" value="ECO:0007669"/>
    <property type="project" value="UniProtKB-UniPathway"/>
</dbReference>
<dbReference type="GO" id="GO:0006229">
    <property type="term" value="P:dUTP biosynthetic process"/>
    <property type="evidence" value="ECO:0007669"/>
    <property type="project" value="UniProtKB-UniRule"/>
</dbReference>
<dbReference type="GO" id="GO:0015949">
    <property type="term" value="P:nucleobase-containing small molecule interconversion"/>
    <property type="evidence" value="ECO:0007669"/>
    <property type="project" value="TreeGrafter"/>
</dbReference>
<dbReference type="CDD" id="cd07557">
    <property type="entry name" value="trimeric_dUTPase"/>
    <property type="match status" value="1"/>
</dbReference>
<dbReference type="FunFam" id="2.70.40.10:FF:000003">
    <property type="entry name" value="dCTP deaminase"/>
    <property type="match status" value="1"/>
</dbReference>
<dbReference type="Gene3D" id="2.70.40.10">
    <property type="match status" value="1"/>
</dbReference>
<dbReference type="HAMAP" id="MF_00146">
    <property type="entry name" value="dCTP_deaminase"/>
    <property type="match status" value="1"/>
</dbReference>
<dbReference type="InterPro" id="IPR011962">
    <property type="entry name" value="dCTP_deaminase"/>
</dbReference>
<dbReference type="InterPro" id="IPR036157">
    <property type="entry name" value="dUTPase-like_sf"/>
</dbReference>
<dbReference type="InterPro" id="IPR033704">
    <property type="entry name" value="dUTPase_trimeric"/>
</dbReference>
<dbReference type="NCBIfam" id="TIGR02274">
    <property type="entry name" value="dCTP_deam"/>
    <property type="match status" value="1"/>
</dbReference>
<dbReference type="PANTHER" id="PTHR42680">
    <property type="entry name" value="DCTP DEAMINASE"/>
    <property type="match status" value="1"/>
</dbReference>
<dbReference type="PANTHER" id="PTHR42680:SF3">
    <property type="entry name" value="DCTP DEAMINASE"/>
    <property type="match status" value="1"/>
</dbReference>
<dbReference type="Pfam" id="PF22769">
    <property type="entry name" value="DCD"/>
    <property type="match status" value="1"/>
</dbReference>
<dbReference type="SUPFAM" id="SSF51283">
    <property type="entry name" value="dUTPase-like"/>
    <property type="match status" value="1"/>
</dbReference>
<proteinExistence type="inferred from homology"/>
<accession>A9L4F3</accession>
<evidence type="ECO:0000255" key="1">
    <source>
        <dbReference type="HAMAP-Rule" id="MF_00146"/>
    </source>
</evidence>
<evidence type="ECO:0000256" key="2">
    <source>
        <dbReference type="SAM" id="MobiDB-lite"/>
    </source>
</evidence>
<comment type="function">
    <text evidence="1">Catalyzes the deamination of dCTP to dUTP.</text>
</comment>
<comment type="catalytic activity">
    <reaction evidence="1">
        <text>dCTP + H2O + H(+) = dUTP + NH4(+)</text>
        <dbReference type="Rhea" id="RHEA:22680"/>
        <dbReference type="ChEBI" id="CHEBI:15377"/>
        <dbReference type="ChEBI" id="CHEBI:15378"/>
        <dbReference type="ChEBI" id="CHEBI:28938"/>
        <dbReference type="ChEBI" id="CHEBI:61481"/>
        <dbReference type="ChEBI" id="CHEBI:61555"/>
        <dbReference type="EC" id="3.5.4.13"/>
    </reaction>
</comment>
<comment type="pathway">
    <text evidence="1">Pyrimidine metabolism; dUMP biosynthesis; dUMP from dCTP (dUTP route): step 1/2.</text>
</comment>
<comment type="subunit">
    <text evidence="1">Homotrimer.</text>
</comment>
<comment type="similarity">
    <text evidence="1">Belongs to the dCTP deaminase family.</text>
</comment>
<name>DCD_SHEB9</name>
<reference key="1">
    <citation type="submission" date="2007-11" db="EMBL/GenBank/DDBJ databases">
        <title>Complete sequence of chromosome of Shewanella baltica OS195.</title>
        <authorList>
            <consortium name="US DOE Joint Genome Institute"/>
            <person name="Copeland A."/>
            <person name="Lucas S."/>
            <person name="Lapidus A."/>
            <person name="Barry K."/>
            <person name="Glavina del Rio T."/>
            <person name="Dalin E."/>
            <person name="Tice H."/>
            <person name="Pitluck S."/>
            <person name="Chain P."/>
            <person name="Malfatti S."/>
            <person name="Shin M."/>
            <person name="Vergez L."/>
            <person name="Schmutz J."/>
            <person name="Larimer F."/>
            <person name="Land M."/>
            <person name="Hauser L."/>
            <person name="Kyrpides N."/>
            <person name="Kim E."/>
            <person name="Brettar I."/>
            <person name="Rodrigues J."/>
            <person name="Konstantinidis K."/>
            <person name="Klappenbach J."/>
            <person name="Hofle M."/>
            <person name="Tiedje J."/>
            <person name="Richardson P."/>
        </authorList>
    </citation>
    <scope>NUCLEOTIDE SEQUENCE [LARGE SCALE GENOMIC DNA]</scope>
    <source>
        <strain>OS195</strain>
    </source>
</reference>